<gene>
    <name evidence="1" type="primary">rplU</name>
    <name type="ordered locus">CC_0319</name>
</gene>
<reference key="1">
    <citation type="journal article" date="2001" name="Proc. Natl. Acad. Sci. U.S.A.">
        <title>Complete genome sequence of Caulobacter crescentus.</title>
        <authorList>
            <person name="Nierman W.C."/>
            <person name="Feldblyum T.V."/>
            <person name="Laub M.T."/>
            <person name="Paulsen I.T."/>
            <person name="Nelson K.E."/>
            <person name="Eisen J.A."/>
            <person name="Heidelberg J.F."/>
            <person name="Alley M.R.K."/>
            <person name="Ohta N."/>
            <person name="Maddock J.R."/>
            <person name="Potocka I."/>
            <person name="Nelson W.C."/>
            <person name="Newton A."/>
            <person name="Stephens C."/>
            <person name="Phadke N.D."/>
            <person name="Ely B."/>
            <person name="DeBoy R.T."/>
            <person name="Dodson R.J."/>
            <person name="Durkin A.S."/>
            <person name="Gwinn M.L."/>
            <person name="Haft D.H."/>
            <person name="Kolonay J.F."/>
            <person name="Smit J."/>
            <person name="Craven M.B."/>
            <person name="Khouri H.M."/>
            <person name="Shetty J."/>
            <person name="Berry K.J."/>
            <person name="Utterback T.R."/>
            <person name="Tran K."/>
            <person name="Wolf A.M."/>
            <person name="Vamathevan J.J."/>
            <person name="Ermolaeva M.D."/>
            <person name="White O."/>
            <person name="Salzberg S.L."/>
            <person name="Venter J.C."/>
            <person name="Shapiro L."/>
            <person name="Fraser C.M."/>
        </authorList>
    </citation>
    <scope>NUCLEOTIDE SEQUENCE [LARGE SCALE GENOMIC DNA]</scope>
    <source>
        <strain>ATCC 19089 / CIP 103742 / CB 15</strain>
    </source>
</reference>
<comment type="function">
    <text evidence="1">This protein binds to 23S rRNA in the presence of protein L20.</text>
</comment>
<comment type="subunit">
    <text evidence="1">Part of the 50S ribosomal subunit. Contacts protein L20.</text>
</comment>
<comment type="similarity">
    <text evidence="1">Belongs to the bacterial ribosomal protein bL21 family.</text>
</comment>
<name>RL21_CAUVC</name>
<organism>
    <name type="scientific">Caulobacter vibrioides (strain ATCC 19089 / CIP 103742 / CB 15)</name>
    <name type="common">Caulobacter crescentus</name>
    <dbReference type="NCBI Taxonomy" id="190650"/>
    <lineage>
        <taxon>Bacteria</taxon>
        <taxon>Pseudomonadati</taxon>
        <taxon>Pseudomonadota</taxon>
        <taxon>Alphaproteobacteria</taxon>
        <taxon>Caulobacterales</taxon>
        <taxon>Caulobacteraceae</taxon>
        <taxon>Caulobacter</taxon>
    </lineage>
</organism>
<feature type="chain" id="PRO_0000270647" description="Large ribosomal subunit protein bL21">
    <location>
        <begin position="1"/>
        <end position="171"/>
    </location>
</feature>
<feature type="region of interest" description="Disordered" evidence="2">
    <location>
        <begin position="144"/>
        <end position="171"/>
    </location>
</feature>
<feature type="compositionally biased region" description="Basic residues" evidence="2">
    <location>
        <begin position="154"/>
        <end position="163"/>
    </location>
</feature>
<sequence length="171" mass="17858">MYAVIKTGGKQYRVQAGDLLVVEKLEGEPGAAVAFGEVLMLGEGEAVTVGAPTVDGAVVSGTLLETRKGEKVKIFKKIRRQGYRRTRGHRQFESVVRVTSVAGAGKEAKWEGTIDLTPKVILDARARGLGDAAVPATIPAPVEAAPAKAEAAPKKKAAPKKAAAKTEEGEA</sequence>
<proteinExistence type="inferred from homology"/>
<dbReference type="EMBL" id="AE005673">
    <property type="protein sequence ID" value="AAK22306.1"/>
    <property type="molecule type" value="Genomic_DNA"/>
</dbReference>
<dbReference type="PIR" id="F87288">
    <property type="entry name" value="F87288"/>
</dbReference>
<dbReference type="RefSeq" id="NP_419138.1">
    <property type="nucleotide sequence ID" value="NC_002696.2"/>
</dbReference>
<dbReference type="RefSeq" id="WP_010918208.1">
    <property type="nucleotide sequence ID" value="NC_002696.2"/>
</dbReference>
<dbReference type="SMR" id="Q9ABB2"/>
<dbReference type="STRING" id="190650.CC_0319"/>
<dbReference type="EnsemblBacteria" id="AAK22306">
    <property type="protein sequence ID" value="AAK22306"/>
    <property type="gene ID" value="CC_0319"/>
</dbReference>
<dbReference type="KEGG" id="ccr:CC_0319"/>
<dbReference type="PATRIC" id="fig|190650.5.peg.318"/>
<dbReference type="eggNOG" id="COG0261">
    <property type="taxonomic scope" value="Bacteria"/>
</dbReference>
<dbReference type="HOGENOM" id="CLU_061463_1_1_5"/>
<dbReference type="BioCyc" id="CAULO:CC0319-MONOMER"/>
<dbReference type="Proteomes" id="UP000001816">
    <property type="component" value="Chromosome"/>
</dbReference>
<dbReference type="GO" id="GO:0005737">
    <property type="term" value="C:cytoplasm"/>
    <property type="evidence" value="ECO:0007669"/>
    <property type="project" value="UniProtKB-ARBA"/>
</dbReference>
<dbReference type="GO" id="GO:1990904">
    <property type="term" value="C:ribonucleoprotein complex"/>
    <property type="evidence" value="ECO:0007669"/>
    <property type="project" value="UniProtKB-KW"/>
</dbReference>
<dbReference type="GO" id="GO:0005840">
    <property type="term" value="C:ribosome"/>
    <property type="evidence" value="ECO:0007669"/>
    <property type="project" value="UniProtKB-KW"/>
</dbReference>
<dbReference type="GO" id="GO:0019843">
    <property type="term" value="F:rRNA binding"/>
    <property type="evidence" value="ECO:0007669"/>
    <property type="project" value="UniProtKB-UniRule"/>
</dbReference>
<dbReference type="GO" id="GO:0003735">
    <property type="term" value="F:structural constituent of ribosome"/>
    <property type="evidence" value="ECO:0007669"/>
    <property type="project" value="InterPro"/>
</dbReference>
<dbReference type="GO" id="GO:0006412">
    <property type="term" value="P:translation"/>
    <property type="evidence" value="ECO:0007669"/>
    <property type="project" value="UniProtKB-UniRule"/>
</dbReference>
<dbReference type="HAMAP" id="MF_01363">
    <property type="entry name" value="Ribosomal_bL21"/>
    <property type="match status" value="1"/>
</dbReference>
<dbReference type="InterPro" id="IPR028909">
    <property type="entry name" value="bL21-like"/>
</dbReference>
<dbReference type="InterPro" id="IPR036164">
    <property type="entry name" value="bL21-like_sf"/>
</dbReference>
<dbReference type="InterPro" id="IPR001787">
    <property type="entry name" value="Ribosomal_bL21"/>
</dbReference>
<dbReference type="NCBIfam" id="TIGR00061">
    <property type="entry name" value="L21"/>
    <property type="match status" value="1"/>
</dbReference>
<dbReference type="PANTHER" id="PTHR21349">
    <property type="entry name" value="50S RIBOSOMAL PROTEIN L21"/>
    <property type="match status" value="1"/>
</dbReference>
<dbReference type="PANTHER" id="PTHR21349:SF0">
    <property type="entry name" value="LARGE RIBOSOMAL SUBUNIT PROTEIN BL21M"/>
    <property type="match status" value="1"/>
</dbReference>
<dbReference type="Pfam" id="PF00829">
    <property type="entry name" value="Ribosomal_L21p"/>
    <property type="match status" value="1"/>
</dbReference>
<dbReference type="SUPFAM" id="SSF141091">
    <property type="entry name" value="L21p-like"/>
    <property type="match status" value="1"/>
</dbReference>
<keyword id="KW-1185">Reference proteome</keyword>
<keyword id="KW-0687">Ribonucleoprotein</keyword>
<keyword id="KW-0689">Ribosomal protein</keyword>
<keyword id="KW-0694">RNA-binding</keyword>
<keyword id="KW-0699">rRNA-binding</keyword>
<accession>Q9ABB2</accession>
<evidence type="ECO:0000255" key="1">
    <source>
        <dbReference type="HAMAP-Rule" id="MF_01363"/>
    </source>
</evidence>
<evidence type="ECO:0000256" key="2">
    <source>
        <dbReference type="SAM" id="MobiDB-lite"/>
    </source>
</evidence>
<evidence type="ECO:0000305" key="3"/>
<protein>
    <recommendedName>
        <fullName evidence="1">Large ribosomal subunit protein bL21</fullName>
    </recommendedName>
    <alternativeName>
        <fullName evidence="3">50S ribosomal protein L21</fullName>
    </alternativeName>
</protein>